<accession>P0DC76</accession>
<accession>P65584</accession>
<accession>Q8NZJ4</accession>
<proteinExistence type="inferred from homology"/>
<comment type="function">
    <text evidence="1">Involved in transcription antitermination. Required for transcription of ribosomal RNA (rRNA) genes. Binds specifically to the boxA antiterminator sequence of the ribosomal RNA (rrn) operons.</text>
</comment>
<comment type="similarity">
    <text evidence="1">Belongs to the NusB family.</text>
</comment>
<dbReference type="EMBL" id="AE014074">
    <property type="protein sequence ID" value="AAM80179.1"/>
    <property type="molecule type" value="Genomic_DNA"/>
</dbReference>
<dbReference type="RefSeq" id="WP_002988501.1">
    <property type="nucleotide sequence ID" value="NC_004070.1"/>
</dbReference>
<dbReference type="SMR" id="P0DC76"/>
<dbReference type="GeneID" id="69900353"/>
<dbReference type="KEGG" id="spg:SpyM3_1572"/>
<dbReference type="HOGENOM" id="CLU_087843_3_2_9"/>
<dbReference type="Proteomes" id="UP000000564">
    <property type="component" value="Chromosome"/>
</dbReference>
<dbReference type="GO" id="GO:0005829">
    <property type="term" value="C:cytosol"/>
    <property type="evidence" value="ECO:0007669"/>
    <property type="project" value="TreeGrafter"/>
</dbReference>
<dbReference type="GO" id="GO:0003723">
    <property type="term" value="F:RNA binding"/>
    <property type="evidence" value="ECO:0007669"/>
    <property type="project" value="UniProtKB-UniRule"/>
</dbReference>
<dbReference type="GO" id="GO:0006353">
    <property type="term" value="P:DNA-templated transcription termination"/>
    <property type="evidence" value="ECO:0007669"/>
    <property type="project" value="UniProtKB-UniRule"/>
</dbReference>
<dbReference type="GO" id="GO:0031564">
    <property type="term" value="P:transcription antitermination"/>
    <property type="evidence" value="ECO:0007669"/>
    <property type="project" value="UniProtKB-KW"/>
</dbReference>
<dbReference type="Gene3D" id="1.10.940.10">
    <property type="entry name" value="NusB-like"/>
    <property type="match status" value="1"/>
</dbReference>
<dbReference type="HAMAP" id="MF_00073">
    <property type="entry name" value="NusB"/>
    <property type="match status" value="1"/>
</dbReference>
<dbReference type="InterPro" id="IPR035926">
    <property type="entry name" value="NusB-like_sf"/>
</dbReference>
<dbReference type="InterPro" id="IPR011605">
    <property type="entry name" value="NusB_fam"/>
</dbReference>
<dbReference type="InterPro" id="IPR006027">
    <property type="entry name" value="NusB_RsmB_TIM44"/>
</dbReference>
<dbReference type="NCBIfam" id="TIGR01951">
    <property type="entry name" value="nusB"/>
    <property type="match status" value="1"/>
</dbReference>
<dbReference type="NCBIfam" id="NF001223">
    <property type="entry name" value="PRK00202.1-1"/>
    <property type="match status" value="1"/>
</dbReference>
<dbReference type="PANTHER" id="PTHR11078:SF3">
    <property type="entry name" value="ANTITERMINATION NUSB DOMAIN-CONTAINING PROTEIN"/>
    <property type="match status" value="1"/>
</dbReference>
<dbReference type="PANTHER" id="PTHR11078">
    <property type="entry name" value="N UTILIZATION SUBSTANCE PROTEIN B-RELATED"/>
    <property type="match status" value="1"/>
</dbReference>
<dbReference type="Pfam" id="PF01029">
    <property type="entry name" value="NusB"/>
    <property type="match status" value="1"/>
</dbReference>
<dbReference type="SUPFAM" id="SSF48013">
    <property type="entry name" value="NusB-like"/>
    <property type="match status" value="1"/>
</dbReference>
<organism>
    <name type="scientific">Streptococcus pyogenes serotype M3 (strain ATCC BAA-595 / MGAS315)</name>
    <dbReference type="NCBI Taxonomy" id="198466"/>
    <lineage>
        <taxon>Bacteria</taxon>
        <taxon>Bacillati</taxon>
        <taxon>Bacillota</taxon>
        <taxon>Bacilli</taxon>
        <taxon>Lactobacillales</taxon>
        <taxon>Streptococcaceae</taxon>
        <taxon>Streptococcus</taxon>
    </lineage>
</organism>
<sequence>MTNSFQNSRRDLRERAFQALFNIEMGAELLAASQFAYGYDKVTGEDAQVLELPIFLLSLVTGVNNHKEELDNLISTHLKKGWSLERLTLTDKTLLRLGLFEIKYFDETPDRVALNEIIEVAKKYSDETSAKFINGLLSQYVSEAPSANKS</sequence>
<protein>
    <recommendedName>
        <fullName evidence="1">Transcription antitermination protein NusB</fullName>
    </recommendedName>
    <alternativeName>
        <fullName evidence="1">Antitermination factor NusB</fullName>
    </alternativeName>
</protein>
<name>NUSB_STRP3</name>
<keyword id="KW-0694">RNA-binding</keyword>
<keyword id="KW-0804">Transcription</keyword>
<keyword id="KW-0889">Transcription antitermination</keyword>
<keyword id="KW-0805">Transcription regulation</keyword>
<reference key="1">
    <citation type="journal article" date="2002" name="Proc. Natl. Acad. Sci. U.S.A.">
        <title>Genome sequence of a serotype M3 strain of group A Streptococcus: phage-encoded toxins, the high-virulence phenotype, and clone emergence.</title>
        <authorList>
            <person name="Beres S.B."/>
            <person name="Sylva G.L."/>
            <person name="Barbian K.D."/>
            <person name="Lei B."/>
            <person name="Hoff J.S."/>
            <person name="Mammarella N.D."/>
            <person name="Liu M.-Y."/>
            <person name="Smoot J.C."/>
            <person name="Porcella S.F."/>
            <person name="Parkins L.D."/>
            <person name="Campbell D.S."/>
            <person name="Smith T.M."/>
            <person name="McCormick J.K."/>
            <person name="Leung D.Y.M."/>
            <person name="Schlievert P.M."/>
            <person name="Musser J.M."/>
        </authorList>
    </citation>
    <scope>NUCLEOTIDE SEQUENCE [LARGE SCALE GENOMIC DNA]</scope>
    <source>
        <strain>ATCC BAA-595 / MGAS315</strain>
    </source>
</reference>
<evidence type="ECO:0000255" key="1">
    <source>
        <dbReference type="HAMAP-Rule" id="MF_00073"/>
    </source>
</evidence>
<feature type="chain" id="PRO_0000176593" description="Transcription antitermination protein NusB">
    <location>
        <begin position="1"/>
        <end position="150"/>
    </location>
</feature>
<gene>
    <name evidence="1" type="primary">nusB</name>
    <name type="ordered locus">SpyM3_1572</name>
</gene>